<protein>
    <recommendedName>
        <fullName>Peroxisomal membrane protein PEX27</fullName>
    </recommendedName>
    <alternativeName>
        <fullName>Peroxin-27</fullName>
    </alternativeName>
</protein>
<proteinExistence type="evidence at protein level"/>
<feature type="chain" id="PRO_0000270569" description="Peroxisomal membrane protein PEX27">
    <location>
        <begin position="1"/>
        <end position="376"/>
    </location>
</feature>
<sequence length="376" mass="44131">MTSDPVNTNISSPTLTDRNADESWELLKREFNTLFSNLKTDSKEEGNFTDNKGVIAKKPIVLQDNDDSDFTQNQGKVATATSTTSDRSFKRTLGSIEMKKRYVKKNCQAKFVFNTLEGKEVCSKILQHTLGLLSLLLLTRKIRLLNFSSKLRLVIQQLSLFRYYLRFGNFAINLYKIIKRFRWLREMKKLHYKDQSILFYFKNFRFFDIIEAFYNLTDELILFHKLQSMFGKKNTSHANTNRLMTFVKEQHYILWEVLNILAINKNIEQWRQLIRDEIYLSIYNTSGNAIKEYELKYKLPTNDKVNLELRKNNITLDFYKIILNLLSNLINIKGKRDKYNSELAYEIISVGSGVTELLKLWNRAKVTSANEHTSAV</sequence>
<gene>
    <name type="primary">PEX27</name>
    <name type="ordered locus">YOR193W</name>
</gene>
<comment type="function">
    <text evidence="1 2 5">Required for regulation of peroxisome size and number. Also promotes peroxisome division and biogenesis.</text>
</comment>
<comment type="subunit">
    <text evidence="1 2 5">Homooligomer. Interacts with PEX25 and PEX34.</text>
</comment>
<comment type="subcellular location">
    <subcellularLocation>
        <location evidence="1 2 3">Peroxisome membrane</location>
        <topology evidence="1 2 3">Peripheral membrane protein</topology>
    </subcellularLocation>
</comment>
<comment type="miscellaneous">
    <text evidence="4">Present with 382 molecules/cell in log phase SD medium.</text>
</comment>
<organism>
    <name type="scientific">Saccharomyces cerevisiae (strain ATCC 204508 / S288c)</name>
    <name type="common">Baker's yeast</name>
    <dbReference type="NCBI Taxonomy" id="559292"/>
    <lineage>
        <taxon>Eukaryota</taxon>
        <taxon>Fungi</taxon>
        <taxon>Dikarya</taxon>
        <taxon>Ascomycota</taxon>
        <taxon>Saccharomycotina</taxon>
        <taxon>Saccharomycetes</taxon>
        <taxon>Saccharomycetales</taxon>
        <taxon>Saccharomycetaceae</taxon>
        <taxon>Saccharomyces</taxon>
    </lineage>
</organism>
<evidence type="ECO:0000269" key="1">
    <source>
    </source>
</evidence>
<evidence type="ECO:0000269" key="2">
    <source>
    </source>
</evidence>
<evidence type="ECO:0000269" key="3">
    <source>
    </source>
</evidence>
<evidence type="ECO:0000269" key="4">
    <source>
    </source>
</evidence>
<evidence type="ECO:0000269" key="5">
    <source>
    </source>
</evidence>
<name>PEX27_YEAST</name>
<dbReference type="EMBL" id="Z75101">
    <property type="protein sequence ID" value="CAA99406.1"/>
    <property type="molecule type" value="Genomic_DNA"/>
</dbReference>
<dbReference type="EMBL" id="AY723869">
    <property type="protein sequence ID" value="AAU09786.1"/>
    <property type="molecule type" value="Genomic_DNA"/>
</dbReference>
<dbReference type="EMBL" id="BK006948">
    <property type="protein sequence ID" value="DAA10968.1"/>
    <property type="molecule type" value="Genomic_DNA"/>
</dbReference>
<dbReference type="PIR" id="S67085">
    <property type="entry name" value="S67085"/>
</dbReference>
<dbReference type="RefSeq" id="NP_014836.3">
    <property type="nucleotide sequence ID" value="NM_001183612.3"/>
</dbReference>
<dbReference type="BioGRID" id="34591">
    <property type="interactions" value="76"/>
</dbReference>
<dbReference type="FunCoup" id="Q08580">
    <property type="interactions" value="65"/>
</dbReference>
<dbReference type="IntAct" id="Q08580">
    <property type="interactions" value="3"/>
</dbReference>
<dbReference type="MINT" id="Q08580"/>
<dbReference type="STRING" id="4932.YOR193W"/>
<dbReference type="TCDB" id="1.A.101.7.3">
    <property type="family name" value="the peroxisomal pore-forming pex11 (pex11) family"/>
</dbReference>
<dbReference type="TCDB" id="3.A.20.1.5">
    <property type="family name" value="the peroxisomal protein importer (ppi) family"/>
</dbReference>
<dbReference type="iPTMnet" id="Q08580"/>
<dbReference type="PaxDb" id="4932-YOR193W"/>
<dbReference type="PeptideAtlas" id="Q08580"/>
<dbReference type="EnsemblFungi" id="YOR193W_mRNA">
    <property type="protein sequence ID" value="YOR193W"/>
    <property type="gene ID" value="YOR193W"/>
</dbReference>
<dbReference type="GeneID" id="854368"/>
<dbReference type="KEGG" id="sce:YOR193W"/>
<dbReference type="AGR" id="SGD:S000005719"/>
<dbReference type="SGD" id="S000005719">
    <property type="gene designation" value="PEX27"/>
</dbReference>
<dbReference type="VEuPathDB" id="FungiDB:YOR193W"/>
<dbReference type="HOGENOM" id="CLU_736106_0_0_1"/>
<dbReference type="InParanoid" id="Q08580"/>
<dbReference type="OMA" id="QSMFGKK"/>
<dbReference type="OrthoDB" id="4054742at2759"/>
<dbReference type="BioCyc" id="YEAST:G3O-33702-MONOMER"/>
<dbReference type="BioGRID-ORCS" id="854368">
    <property type="hits" value="0 hits in 10 CRISPR screens"/>
</dbReference>
<dbReference type="PRO" id="PR:Q08580"/>
<dbReference type="Proteomes" id="UP000002311">
    <property type="component" value="Chromosome XV"/>
</dbReference>
<dbReference type="RNAct" id="Q08580">
    <property type="molecule type" value="protein"/>
</dbReference>
<dbReference type="GO" id="GO:0005778">
    <property type="term" value="C:peroxisomal membrane"/>
    <property type="evidence" value="ECO:0000314"/>
    <property type="project" value="SGD"/>
</dbReference>
<dbReference type="GO" id="GO:0005777">
    <property type="term" value="C:peroxisome"/>
    <property type="evidence" value="ECO:0000314"/>
    <property type="project" value="UniProtKB"/>
</dbReference>
<dbReference type="GO" id="GO:0016559">
    <property type="term" value="P:peroxisome fission"/>
    <property type="evidence" value="ECO:0000314"/>
    <property type="project" value="UniProtKB"/>
</dbReference>
<dbReference type="GO" id="GO:0007031">
    <property type="term" value="P:peroxisome organization"/>
    <property type="evidence" value="ECO:0000315"/>
    <property type="project" value="SGD"/>
</dbReference>
<dbReference type="GO" id="GO:0044375">
    <property type="term" value="P:regulation of peroxisome size"/>
    <property type="evidence" value="ECO:0000314"/>
    <property type="project" value="UniProtKB"/>
</dbReference>
<keyword id="KW-0472">Membrane</keyword>
<keyword id="KW-0576">Peroxisome</keyword>
<keyword id="KW-0962">Peroxisome biogenesis</keyword>
<keyword id="KW-1185">Reference proteome</keyword>
<reference key="1">
    <citation type="journal article" date="1997" name="Nature">
        <title>The nucleotide sequence of Saccharomyces cerevisiae chromosome XV.</title>
        <authorList>
            <person name="Dujon B."/>
            <person name="Albermann K."/>
            <person name="Aldea M."/>
            <person name="Alexandraki D."/>
            <person name="Ansorge W."/>
            <person name="Arino J."/>
            <person name="Benes V."/>
            <person name="Bohn C."/>
            <person name="Bolotin-Fukuhara M."/>
            <person name="Bordonne R."/>
            <person name="Boyer J."/>
            <person name="Camasses A."/>
            <person name="Casamayor A."/>
            <person name="Casas C."/>
            <person name="Cheret G."/>
            <person name="Cziepluch C."/>
            <person name="Daignan-Fornier B."/>
            <person name="Dang V.-D."/>
            <person name="de Haan M."/>
            <person name="Delius H."/>
            <person name="Durand P."/>
            <person name="Fairhead C."/>
            <person name="Feldmann H."/>
            <person name="Gaillon L."/>
            <person name="Galisson F."/>
            <person name="Gamo F.-J."/>
            <person name="Gancedo C."/>
            <person name="Goffeau A."/>
            <person name="Goulding S.E."/>
            <person name="Grivell L.A."/>
            <person name="Habbig B."/>
            <person name="Hand N.J."/>
            <person name="Hani J."/>
            <person name="Hattenhorst U."/>
            <person name="Hebling U."/>
            <person name="Hernando Y."/>
            <person name="Herrero E."/>
            <person name="Heumann K."/>
            <person name="Hiesel R."/>
            <person name="Hilger F."/>
            <person name="Hofmann B."/>
            <person name="Hollenberg C.P."/>
            <person name="Hughes B."/>
            <person name="Jauniaux J.-C."/>
            <person name="Kalogeropoulos A."/>
            <person name="Katsoulou C."/>
            <person name="Kordes E."/>
            <person name="Lafuente M.J."/>
            <person name="Landt O."/>
            <person name="Louis E.J."/>
            <person name="Maarse A.C."/>
            <person name="Madania A."/>
            <person name="Mannhaupt G."/>
            <person name="Marck C."/>
            <person name="Martin R.P."/>
            <person name="Mewes H.-W."/>
            <person name="Michaux G."/>
            <person name="Paces V."/>
            <person name="Parle-McDermott A.G."/>
            <person name="Pearson B.M."/>
            <person name="Perrin A."/>
            <person name="Pettersson B."/>
            <person name="Poch O."/>
            <person name="Pohl T.M."/>
            <person name="Poirey R."/>
            <person name="Portetelle D."/>
            <person name="Pujol A."/>
            <person name="Purnelle B."/>
            <person name="Ramezani Rad M."/>
            <person name="Rechmann S."/>
            <person name="Schwager C."/>
            <person name="Schweizer M."/>
            <person name="Sor F."/>
            <person name="Sterky F."/>
            <person name="Tarassov I.A."/>
            <person name="Teodoru C."/>
            <person name="Tettelin H."/>
            <person name="Thierry A."/>
            <person name="Tobiasch E."/>
            <person name="Tzermia M."/>
            <person name="Uhlen M."/>
            <person name="Unseld M."/>
            <person name="Valens M."/>
            <person name="Vandenbol M."/>
            <person name="Vetter I."/>
            <person name="Vlcek C."/>
            <person name="Voet M."/>
            <person name="Volckaert G."/>
            <person name="Voss H."/>
            <person name="Wambutt R."/>
            <person name="Wedler H."/>
            <person name="Wiemann S."/>
            <person name="Winsor B."/>
            <person name="Wolfe K.H."/>
            <person name="Zollner A."/>
            <person name="Zumstein E."/>
            <person name="Kleine K."/>
        </authorList>
    </citation>
    <scope>NUCLEOTIDE SEQUENCE [LARGE SCALE GENOMIC DNA]</scope>
    <source>
        <strain>ATCC 204508 / S288c</strain>
    </source>
</reference>
<reference key="2">
    <citation type="journal article" date="2014" name="G3 (Bethesda)">
        <title>The reference genome sequence of Saccharomyces cerevisiae: Then and now.</title>
        <authorList>
            <person name="Engel S.R."/>
            <person name="Dietrich F.S."/>
            <person name="Fisk D.G."/>
            <person name="Binkley G."/>
            <person name="Balakrishnan R."/>
            <person name="Costanzo M.C."/>
            <person name="Dwight S.S."/>
            <person name="Hitz B.C."/>
            <person name="Karra K."/>
            <person name="Nash R.S."/>
            <person name="Weng S."/>
            <person name="Wong E.D."/>
            <person name="Lloyd P."/>
            <person name="Skrzypek M.S."/>
            <person name="Miyasato S.R."/>
            <person name="Simison M."/>
            <person name="Cherry J.M."/>
        </authorList>
    </citation>
    <scope>GENOME REANNOTATION</scope>
    <source>
        <strain>ATCC 204508 / S288c</strain>
    </source>
</reference>
<reference key="3">
    <citation type="journal article" date="2007" name="Genome Res.">
        <title>Approaching a complete repository of sequence-verified protein-encoding clones for Saccharomyces cerevisiae.</title>
        <authorList>
            <person name="Hu Y."/>
            <person name="Rolfs A."/>
            <person name="Bhullar B."/>
            <person name="Murthy T.V.S."/>
            <person name="Zhu C."/>
            <person name="Berger M.F."/>
            <person name="Camargo A.A."/>
            <person name="Kelley F."/>
            <person name="McCarron S."/>
            <person name="Jepson D."/>
            <person name="Richardson A."/>
            <person name="Raphael J."/>
            <person name="Moreira D."/>
            <person name="Taycher E."/>
            <person name="Zuo D."/>
            <person name="Mohr S."/>
            <person name="Kane M.F."/>
            <person name="Williamson J."/>
            <person name="Simpson A.J.G."/>
            <person name="Bulyk M.L."/>
            <person name="Harlow E."/>
            <person name="Marsischky G."/>
            <person name="Kolodner R.D."/>
            <person name="LaBaer J."/>
        </authorList>
    </citation>
    <scope>NUCLEOTIDE SEQUENCE [GENOMIC DNA]</scope>
    <source>
        <strain>ATCC 204508 / S288c</strain>
    </source>
</reference>
<reference key="4">
    <citation type="journal article" date="2003" name="Mol. Biol. Cell">
        <title>Pex11-related proteins in peroxisome dynamics: a role for the novel peroxin Pex27p in controlling peroxisome size and number in Saccharomyces cerevisiae.</title>
        <authorList>
            <person name="Tam Y.Y.C."/>
            <person name="Torres-Guzman J.C."/>
            <person name="Vizeacoumar F.J."/>
            <person name="Smith J.J."/>
            <person name="Marelli M."/>
            <person name="Aitchison J.D."/>
            <person name="Rachubinski R.A."/>
        </authorList>
    </citation>
    <scope>FUNCTION</scope>
    <scope>SUBUNIT</scope>
    <scope>INTERACTION WITH PEX25</scope>
    <scope>SUBCELLULAR LOCATION</scope>
</reference>
<reference key="5">
    <citation type="journal article" date="2003" name="Mol. Biol. Cell">
        <title>Conserved function of pex11p and the novel pex25p and pex27p in peroxisome biogenesis.</title>
        <authorList>
            <person name="Rottensteiner H."/>
            <person name="Stein K."/>
            <person name="Sonnenhol E."/>
            <person name="Erdmann R."/>
        </authorList>
    </citation>
    <scope>FUNCTION</scope>
    <scope>SUBUNIT</scope>
    <scope>INTERACTION WITH PEX25</scope>
    <scope>SUBCELLULAR LOCATION</scope>
</reference>
<reference key="6">
    <citation type="journal article" date="2003" name="Nature">
        <title>Global analysis of protein localization in budding yeast.</title>
        <authorList>
            <person name="Huh W.-K."/>
            <person name="Falvo J.V."/>
            <person name="Gerke L.C."/>
            <person name="Carroll A.S."/>
            <person name="Howson R.W."/>
            <person name="Weissman J.S."/>
            <person name="O'Shea E.K."/>
        </authorList>
    </citation>
    <scope>SUBCELLULAR LOCATION [LARGE SCALE ANALYSIS]</scope>
</reference>
<reference key="7">
    <citation type="journal article" date="2003" name="Nature">
        <title>Global analysis of protein expression in yeast.</title>
        <authorList>
            <person name="Ghaemmaghami S."/>
            <person name="Huh W.-K."/>
            <person name="Bower K."/>
            <person name="Howson R.W."/>
            <person name="Belle A."/>
            <person name="Dephoure N."/>
            <person name="O'Shea E.K."/>
            <person name="Weissman J.S."/>
        </authorList>
    </citation>
    <scope>LEVEL OF PROTEIN EXPRESSION [LARGE SCALE ANALYSIS]</scope>
</reference>
<reference key="8">
    <citation type="journal article" date="2011" name="Mol. Biol. Cell">
        <title>The peroxin Pex34p functions with the Pex11 family of peroxisomal divisional proteins to regulate the peroxisome population in yeast.</title>
        <authorList>
            <person name="Tower R.J."/>
            <person name="Fagarasanu A."/>
            <person name="Aitchison J.D."/>
            <person name="Rachubinski R.A."/>
        </authorList>
    </citation>
    <scope>FUNCTION</scope>
    <scope>INTERACTION WITH PEX34</scope>
</reference>
<accession>Q08580</accession>
<accession>D6W2Q2</accession>